<organism>
    <name type="scientific">Cavia porcellus</name>
    <name type="common">Guinea pig</name>
    <dbReference type="NCBI Taxonomy" id="10141"/>
    <lineage>
        <taxon>Eukaryota</taxon>
        <taxon>Metazoa</taxon>
        <taxon>Chordata</taxon>
        <taxon>Craniata</taxon>
        <taxon>Vertebrata</taxon>
        <taxon>Euteleostomi</taxon>
        <taxon>Mammalia</taxon>
        <taxon>Eutheria</taxon>
        <taxon>Euarchontoglires</taxon>
        <taxon>Glires</taxon>
        <taxon>Rodentia</taxon>
        <taxon>Hystricomorpha</taxon>
        <taxon>Caviidae</taxon>
        <taxon>Cavia</taxon>
    </lineage>
</organism>
<feature type="signal peptide" evidence="2">
    <location>
        <begin position="1"/>
        <end position="22"/>
    </location>
</feature>
<feature type="chain" id="PRO_0000012805" description="Calcitonin receptor">
    <location>
        <begin position="23"/>
        <end position="478"/>
    </location>
</feature>
<feature type="topological domain" description="Extracellular" evidence="3">
    <location>
        <begin position="23"/>
        <end position="146"/>
    </location>
</feature>
<feature type="transmembrane region" description="Helical; Name=1" evidence="1">
    <location>
        <begin position="147"/>
        <end position="169"/>
    </location>
</feature>
<feature type="topological domain" description="Cytoplasmic" evidence="3">
    <location>
        <begin position="170"/>
        <end position="181"/>
    </location>
</feature>
<feature type="transmembrane region" description="Helical; Name=2" evidence="1">
    <location>
        <begin position="182"/>
        <end position="202"/>
    </location>
</feature>
<feature type="topological domain" description="Extracellular" evidence="3">
    <location>
        <begin position="203"/>
        <end position="219"/>
    </location>
</feature>
<feature type="transmembrane region" description="Helical; Name=3" evidence="1">
    <location>
        <begin position="220"/>
        <end position="242"/>
    </location>
</feature>
<feature type="topological domain" description="Cytoplasmic" evidence="3">
    <location>
        <begin position="243"/>
        <end position="259"/>
    </location>
</feature>
<feature type="transmembrane region" description="Helical; Name=4" evidence="1">
    <location>
        <begin position="260"/>
        <end position="280"/>
    </location>
</feature>
<feature type="topological domain" description="Extracellular" evidence="3">
    <location>
        <begin position="281"/>
        <end position="296"/>
    </location>
</feature>
<feature type="transmembrane region" description="Helical; Name=5" evidence="1">
    <location>
        <begin position="297"/>
        <end position="320"/>
    </location>
</feature>
<feature type="topological domain" description="Cytoplasmic" evidence="3">
    <location>
        <begin position="321"/>
        <end position="340"/>
    </location>
</feature>
<feature type="transmembrane region" description="Helical; Name=6" evidence="1">
    <location>
        <begin position="341"/>
        <end position="359"/>
    </location>
</feature>
<feature type="topological domain" description="Extracellular" evidence="3">
    <location>
        <begin position="360"/>
        <end position="367"/>
    </location>
</feature>
<feature type="transmembrane region" description="Helical; Name=7" evidence="1">
    <location>
        <begin position="368"/>
        <end position="394"/>
    </location>
</feature>
<feature type="topological domain" description="Cytoplasmic" evidence="3">
    <location>
        <begin position="395"/>
        <end position="478"/>
    </location>
</feature>
<feature type="glycosylation site" description="N-linked (GlcNAc...) asparagine" evidence="2">
    <location>
        <position position="28"/>
    </location>
</feature>
<feature type="glycosylation site" description="N-linked (GlcNAc...) asparagine" evidence="2">
    <location>
        <position position="73"/>
    </location>
</feature>
<feature type="glycosylation site" description="N-linked (GlcNAc...) asparagine" evidence="2">
    <location>
        <position position="125"/>
    </location>
</feature>
<feature type="glycosylation site" description="N-linked (GlcNAc...) asparagine" evidence="2">
    <location>
        <position position="130"/>
    </location>
</feature>
<feature type="disulfide bond" evidence="1">
    <location>
        <begin position="55"/>
        <end position="81"/>
    </location>
</feature>
<feature type="disulfide bond" evidence="1">
    <location>
        <begin position="72"/>
        <end position="112"/>
    </location>
</feature>
<feature type="disulfide bond" evidence="1">
    <location>
        <begin position="95"/>
        <end position="134"/>
    </location>
</feature>
<feature type="disulfide bond" evidence="1">
    <location>
        <begin position="219"/>
        <end position="289"/>
    </location>
</feature>
<evidence type="ECO:0000250" key="1">
    <source>
        <dbReference type="UniProtKB" id="P30988"/>
    </source>
</evidence>
<evidence type="ECO:0000255" key="2"/>
<evidence type="ECO:0000305" key="3"/>
<gene>
    <name evidence="1" type="primary">CALCR</name>
</gene>
<sequence>MRFTFTRQFLAFFILISNPASILPRSENLTFPTFEPEPYLYSVGRKKLVDAQYRCYDRMQQLPPYEGEGPYCNRTWDGWMCWDDTPAGVLSVQLCPDYFPDFDPTEKVTKYCDESGVWFKHPENNRTWSNYTLCNAFTPEKLQNAYVLYYLAIVGHSMSIITLVVSLGIFVYFRSLGCQRVTLHKNMFLTYILNSMIIIIHLVEVVPNGELVRKDPVSCKILHFFHQYMMACNYFWMLCEGIYLHTLIVVSVFNEAKHLRWYYLLGWGFPLVPTTIHAITRALYFNDNCWISVDTHLLYIIHGPVMVALVVNFFFLLNIVRVLVTKMRETHEAESYMYLKAVKATMILVPLLGIQFVVFPWRPSNKVLGKIYDYFMHSLIHFQGFFVATIYCFCNNEVQTTLKRQWAQFKIQWNQRWGTRPSNRSAAARAAAAAAEAGGDNIPVYICHQEPRNDPPNNQGEEGAEMIVLNIIEKESSA</sequence>
<dbReference type="EMBL" id="U92463">
    <property type="protein sequence ID" value="AAB58586.1"/>
    <property type="molecule type" value="mRNA"/>
</dbReference>
<dbReference type="RefSeq" id="NP_001166395.1">
    <property type="nucleotide sequence ID" value="NM_001172924.1"/>
</dbReference>
<dbReference type="SMR" id="O08893"/>
<dbReference type="FunCoup" id="O08893">
    <property type="interactions" value="414"/>
</dbReference>
<dbReference type="STRING" id="10141.ENSCPOP00000006261"/>
<dbReference type="GlyCosmos" id="O08893">
    <property type="glycosylation" value="4 sites, No reported glycans"/>
</dbReference>
<dbReference type="GeneID" id="100135491"/>
<dbReference type="KEGG" id="cpoc:100135491"/>
<dbReference type="CTD" id="799"/>
<dbReference type="eggNOG" id="KOG4564">
    <property type="taxonomic scope" value="Eukaryota"/>
</dbReference>
<dbReference type="InParanoid" id="O08893"/>
<dbReference type="OrthoDB" id="16753at2759"/>
<dbReference type="Proteomes" id="UP000005447">
    <property type="component" value="Unassembled WGS sequence"/>
</dbReference>
<dbReference type="GO" id="GO:0030424">
    <property type="term" value="C:axon"/>
    <property type="evidence" value="ECO:0007669"/>
    <property type="project" value="TreeGrafter"/>
</dbReference>
<dbReference type="GO" id="GO:0005886">
    <property type="term" value="C:plasma membrane"/>
    <property type="evidence" value="ECO:0007669"/>
    <property type="project" value="UniProtKB-SubCell"/>
</dbReference>
<dbReference type="GO" id="GO:0004948">
    <property type="term" value="F:calcitonin receptor activity"/>
    <property type="evidence" value="ECO:0007669"/>
    <property type="project" value="InterPro"/>
</dbReference>
<dbReference type="GO" id="GO:0007189">
    <property type="term" value="P:adenylate cyclase-activating G protein-coupled receptor signaling pathway"/>
    <property type="evidence" value="ECO:0007669"/>
    <property type="project" value="TreeGrafter"/>
</dbReference>
<dbReference type="GO" id="GO:0007166">
    <property type="term" value="P:cell surface receptor signaling pathway"/>
    <property type="evidence" value="ECO:0007669"/>
    <property type="project" value="InterPro"/>
</dbReference>
<dbReference type="GO" id="GO:0007204">
    <property type="term" value="P:positive regulation of cytosolic calcium ion concentration"/>
    <property type="evidence" value="ECO:0007669"/>
    <property type="project" value="TreeGrafter"/>
</dbReference>
<dbReference type="CDD" id="cd15274">
    <property type="entry name" value="7tmB1_calcitonin_R"/>
    <property type="match status" value="1"/>
</dbReference>
<dbReference type="FunFam" id="1.20.1070.10:FF:000149">
    <property type="entry name" value="Calcitonin receptor"/>
    <property type="match status" value="1"/>
</dbReference>
<dbReference type="FunFam" id="4.10.1240.10:FF:000012">
    <property type="entry name" value="Calcitonin receptor"/>
    <property type="match status" value="1"/>
</dbReference>
<dbReference type="Gene3D" id="4.10.1240.10">
    <property type="entry name" value="GPCR, family 2, extracellular hormone receptor domain"/>
    <property type="match status" value="1"/>
</dbReference>
<dbReference type="Gene3D" id="1.20.1070.10">
    <property type="entry name" value="Rhodopsin 7-helix transmembrane proteins"/>
    <property type="match status" value="1"/>
</dbReference>
<dbReference type="InterPro" id="IPR050332">
    <property type="entry name" value="GPCR_2"/>
</dbReference>
<dbReference type="InterPro" id="IPR017981">
    <property type="entry name" value="GPCR_2-like_7TM"/>
</dbReference>
<dbReference type="InterPro" id="IPR001688">
    <property type="entry name" value="GPCR_2_calcitonin_rcpt"/>
</dbReference>
<dbReference type="InterPro" id="IPR003287">
    <property type="entry name" value="GPCR_2_calcitonin_rcpt_fam"/>
</dbReference>
<dbReference type="InterPro" id="IPR036445">
    <property type="entry name" value="GPCR_2_extracell_dom_sf"/>
</dbReference>
<dbReference type="InterPro" id="IPR001879">
    <property type="entry name" value="GPCR_2_extracellular_dom"/>
</dbReference>
<dbReference type="InterPro" id="IPR000832">
    <property type="entry name" value="GPCR_2_secretin-like"/>
</dbReference>
<dbReference type="InterPro" id="IPR017983">
    <property type="entry name" value="GPCR_2_secretin-like_CS"/>
</dbReference>
<dbReference type="PANTHER" id="PTHR45620:SF8">
    <property type="entry name" value="CALCITONIN RECEPTOR"/>
    <property type="match status" value="1"/>
</dbReference>
<dbReference type="PANTHER" id="PTHR45620">
    <property type="entry name" value="PDF RECEPTOR-LIKE PROTEIN-RELATED"/>
    <property type="match status" value="1"/>
</dbReference>
<dbReference type="Pfam" id="PF00002">
    <property type="entry name" value="7tm_2"/>
    <property type="match status" value="1"/>
</dbReference>
<dbReference type="Pfam" id="PF02793">
    <property type="entry name" value="HRM"/>
    <property type="match status" value="1"/>
</dbReference>
<dbReference type="PRINTS" id="PR00361">
    <property type="entry name" value="CALCITONINR"/>
</dbReference>
<dbReference type="PRINTS" id="PR01350">
    <property type="entry name" value="CTRFAMILY"/>
</dbReference>
<dbReference type="PRINTS" id="PR00249">
    <property type="entry name" value="GPCRSECRETIN"/>
</dbReference>
<dbReference type="SMART" id="SM00008">
    <property type="entry name" value="HormR"/>
    <property type="match status" value="1"/>
</dbReference>
<dbReference type="SUPFAM" id="SSF81321">
    <property type="entry name" value="Family A G protein-coupled receptor-like"/>
    <property type="match status" value="1"/>
</dbReference>
<dbReference type="SUPFAM" id="SSF111418">
    <property type="entry name" value="Hormone receptor domain"/>
    <property type="match status" value="1"/>
</dbReference>
<dbReference type="PROSITE" id="PS00649">
    <property type="entry name" value="G_PROTEIN_RECEP_F2_1"/>
    <property type="match status" value="1"/>
</dbReference>
<dbReference type="PROSITE" id="PS00650">
    <property type="entry name" value="G_PROTEIN_RECEP_F2_2"/>
    <property type="match status" value="1"/>
</dbReference>
<dbReference type="PROSITE" id="PS50227">
    <property type="entry name" value="G_PROTEIN_RECEP_F2_3"/>
    <property type="match status" value="1"/>
</dbReference>
<dbReference type="PROSITE" id="PS50261">
    <property type="entry name" value="G_PROTEIN_RECEP_F2_4"/>
    <property type="match status" value="1"/>
</dbReference>
<name>CALCR_CAVPO</name>
<comment type="function">
    <text evidence="1">G protein-coupled receptor activated by ligand peptides amylin (IAPP), calcitonin (CT/CALCA) and calcitonin gene-related peptide type 1 (CGRP1/CALCA). CALCR interacts with receptor-activity-modifying proteins RAMP1, 2 and 3 to form receptor complexes AMYR1, 2 and 3, respectively. IAPP, CT and CGRP1 activate CALCR and AMYRs with distinct modes of receptor activation resulting in specific phenotypes. Ligand binding causes a conformation change that triggers signaling via guanine nucleotide-binding proteins (G proteins) and modulates the activity of downstream effectors. Activates cAMP-dependent pathway.</text>
</comment>
<comment type="subunit">
    <text evidence="1">Heterodimer of CALCR and RAMP1, RAMP2 or RAMP3; the receptor complexes function as AMYR1, AMYR2 and AMYR3 receptors, respectively, and respond to amylin/IAPP, calcitonin/CT and CGRP1 ligands. Interacts with GPRASP2.</text>
</comment>
<comment type="subcellular location">
    <subcellularLocation>
        <location evidence="1">Cell membrane</location>
        <topology evidence="1">Multi-pass membrane protein</topology>
    </subcellularLocation>
</comment>
<comment type="similarity">
    <text evidence="3">Belongs to the G-protein coupled receptor 2 family.</text>
</comment>
<protein>
    <recommendedName>
        <fullName evidence="1">Calcitonin receptor</fullName>
        <shortName>CT-R</shortName>
    </recommendedName>
</protein>
<keyword id="KW-1003">Cell membrane</keyword>
<keyword id="KW-1015">Disulfide bond</keyword>
<keyword id="KW-0297">G-protein coupled receptor</keyword>
<keyword id="KW-0325">Glycoprotein</keyword>
<keyword id="KW-0472">Membrane</keyword>
<keyword id="KW-0675">Receptor</keyword>
<keyword id="KW-1185">Reference proteome</keyword>
<keyword id="KW-0732">Signal</keyword>
<keyword id="KW-0807">Transducer</keyword>
<keyword id="KW-0812">Transmembrane</keyword>
<keyword id="KW-1133">Transmembrane helix</keyword>
<reference key="1">
    <citation type="journal article" date="1997" name="J. Neurochem.">
        <title>Cloning, characterization, and expression of a calcitonin receptor from guinea pig brain.</title>
        <authorList>
            <person name="Sarkar A."/>
            <person name="Dickerson I.M."/>
        </authorList>
    </citation>
    <scope>NUCLEOTIDE SEQUENCE [MRNA]</scope>
    <source>
        <tissue>Brain</tissue>
    </source>
</reference>
<accession>O08893</accession>
<proteinExistence type="evidence at transcript level"/>